<evidence type="ECO:0000255" key="1">
    <source>
        <dbReference type="HAMAP-Rule" id="MF_01576"/>
    </source>
</evidence>
<organism>
    <name type="scientific">Caulobacter sp. (strain K31)</name>
    <dbReference type="NCBI Taxonomy" id="366602"/>
    <lineage>
        <taxon>Bacteria</taxon>
        <taxon>Pseudomonadati</taxon>
        <taxon>Pseudomonadota</taxon>
        <taxon>Alphaproteobacteria</taxon>
        <taxon>Caulobacterales</taxon>
        <taxon>Caulobacteraceae</taxon>
        <taxon>Caulobacter</taxon>
    </lineage>
</organism>
<protein>
    <recommendedName>
        <fullName evidence="1">Bifunctional protein FolD</fullName>
    </recommendedName>
    <domain>
        <recommendedName>
            <fullName evidence="1">Methylenetetrahydrofolate dehydrogenase</fullName>
            <ecNumber evidence="1">1.5.1.5</ecNumber>
        </recommendedName>
    </domain>
    <domain>
        <recommendedName>
            <fullName evidence="1">Methenyltetrahydrofolate cyclohydrolase</fullName>
            <ecNumber evidence="1">3.5.4.9</ecNumber>
        </recommendedName>
    </domain>
</protein>
<proteinExistence type="inferred from homology"/>
<sequence length="298" mass="30781">MSQARIIDGKAFAARLREQVAAEVAVLKAEHGLTPGLAVVLVGEDPASQVYVRNKGEQTLAAGMHSETHRLPANASQAELLSLVDRLNDDPAIHGVLVQFPVPDHLSQAAIVAAISPDKDVDGLTVVNAGRLASGLPALTSCTPAGCMVLLRDVVGDLTGKRAVVIGRSNLMGKPMAQLLLAADCTVTIAHSRSRDLPAICREADILVAAVGRAEMVRGDWIKPGATVIDVGISRFPSRDPVAAAAGKTRLVGDVAFDEAKEVAGAITPVPGGVGPMTIAMLLANTVSAAKRLNGIAE</sequence>
<feature type="chain" id="PRO_0000340578" description="Bifunctional protein FolD">
    <location>
        <begin position="1"/>
        <end position="298"/>
    </location>
</feature>
<feature type="binding site" evidence="1">
    <location>
        <begin position="167"/>
        <end position="169"/>
    </location>
    <ligand>
        <name>NADP(+)</name>
        <dbReference type="ChEBI" id="CHEBI:58349"/>
    </ligand>
</feature>
<feature type="binding site" evidence="1">
    <location>
        <position position="192"/>
    </location>
    <ligand>
        <name>NADP(+)</name>
        <dbReference type="ChEBI" id="CHEBI:58349"/>
    </ligand>
</feature>
<feature type="binding site" evidence="1">
    <location>
        <position position="233"/>
    </location>
    <ligand>
        <name>NADP(+)</name>
        <dbReference type="ChEBI" id="CHEBI:58349"/>
    </ligand>
</feature>
<gene>
    <name evidence="1" type="primary">folD</name>
    <name type="ordered locus">Caul_1714</name>
</gene>
<name>FOLD_CAUSK</name>
<dbReference type="EC" id="1.5.1.5" evidence="1"/>
<dbReference type="EC" id="3.5.4.9" evidence="1"/>
<dbReference type="EMBL" id="CP000927">
    <property type="protein sequence ID" value="ABZ70843.1"/>
    <property type="molecule type" value="Genomic_DNA"/>
</dbReference>
<dbReference type="SMR" id="B0T3F7"/>
<dbReference type="STRING" id="366602.Caul_1714"/>
<dbReference type="KEGG" id="cak:Caul_1714"/>
<dbReference type="eggNOG" id="COG0190">
    <property type="taxonomic scope" value="Bacteria"/>
</dbReference>
<dbReference type="HOGENOM" id="CLU_034045_2_1_5"/>
<dbReference type="OrthoDB" id="9803580at2"/>
<dbReference type="UniPathway" id="UPA00193"/>
<dbReference type="GO" id="GO:0005829">
    <property type="term" value="C:cytosol"/>
    <property type="evidence" value="ECO:0007669"/>
    <property type="project" value="TreeGrafter"/>
</dbReference>
<dbReference type="GO" id="GO:0004477">
    <property type="term" value="F:methenyltetrahydrofolate cyclohydrolase activity"/>
    <property type="evidence" value="ECO:0007669"/>
    <property type="project" value="UniProtKB-UniRule"/>
</dbReference>
<dbReference type="GO" id="GO:0004488">
    <property type="term" value="F:methylenetetrahydrofolate dehydrogenase (NADP+) activity"/>
    <property type="evidence" value="ECO:0007669"/>
    <property type="project" value="UniProtKB-UniRule"/>
</dbReference>
<dbReference type="GO" id="GO:0000105">
    <property type="term" value="P:L-histidine biosynthetic process"/>
    <property type="evidence" value="ECO:0007669"/>
    <property type="project" value="UniProtKB-KW"/>
</dbReference>
<dbReference type="GO" id="GO:0009086">
    <property type="term" value="P:methionine biosynthetic process"/>
    <property type="evidence" value="ECO:0007669"/>
    <property type="project" value="UniProtKB-KW"/>
</dbReference>
<dbReference type="GO" id="GO:0006164">
    <property type="term" value="P:purine nucleotide biosynthetic process"/>
    <property type="evidence" value="ECO:0007669"/>
    <property type="project" value="UniProtKB-KW"/>
</dbReference>
<dbReference type="GO" id="GO:0035999">
    <property type="term" value="P:tetrahydrofolate interconversion"/>
    <property type="evidence" value="ECO:0007669"/>
    <property type="project" value="UniProtKB-UniRule"/>
</dbReference>
<dbReference type="CDD" id="cd01080">
    <property type="entry name" value="NAD_bind_m-THF_DH_Cyclohyd"/>
    <property type="match status" value="1"/>
</dbReference>
<dbReference type="FunFam" id="3.40.50.720:FF:000006">
    <property type="entry name" value="Bifunctional protein FolD"/>
    <property type="match status" value="1"/>
</dbReference>
<dbReference type="FunFam" id="3.40.50.10860:FF:000005">
    <property type="entry name" value="C-1-tetrahydrofolate synthase, cytoplasmic, putative"/>
    <property type="match status" value="1"/>
</dbReference>
<dbReference type="Gene3D" id="3.40.50.10860">
    <property type="entry name" value="Leucine Dehydrogenase, chain A, domain 1"/>
    <property type="match status" value="1"/>
</dbReference>
<dbReference type="Gene3D" id="3.40.50.720">
    <property type="entry name" value="NAD(P)-binding Rossmann-like Domain"/>
    <property type="match status" value="1"/>
</dbReference>
<dbReference type="HAMAP" id="MF_01576">
    <property type="entry name" value="THF_DHG_CYH"/>
    <property type="match status" value="1"/>
</dbReference>
<dbReference type="InterPro" id="IPR046346">
    <property type="entry name" value="Aminoacid_DH-like_N_sf"/>
</dbReference>
<dbReference type="InterPro" id="IPR036291">
    <property type="entry name" value="NAD(P)-bd_dom_sf"/>
</dbReference>
<dbReference type="InterPro" id="IPR000672">
    <property type="entry name" value="THF_DH/CycHdrlase"/>
</dbReference>
<dbReference type="InterPro" id="IPR020630">
    <property type="entry name" value="THF_DH/CycHdrlase_cat_dom"/>
</dbReference>
<dbReference type="InterPro" id="IPR020867">
    <property type="entry name" value="THF_DH/CycHdrlase_CS"/>
</dbReference>
<dbReference type="InterPro" id="IPR020631">
    <property type="entry name" value="THF_DH/CycHdrlase_NAD-bd_dom"/>
</dbReference>
<dbReference type="NCBIfam" id="NF010783">
    <property type="entry name" value="PRK14186.1"/>
    <property type="match status" value="1"/>
</dbReference>
<dbReference type="NCBIfam" id="NF010785">
    <property type="entry name" value="PRK14188.1"/>
    <property type="match status" value="1"/>
</dbReference>
<dbReference type="PANTHER" id="PTHR48099:SF5">
    <property type="entry name" value="C-1-TETRAHYDROFOLATE SYNTHASE, CYTOPLASMIC"/>
    <property type="match status" value="1"/>
</dbReference>
<dbReference type="PANTHER" id="PTHR48099">
    <property type="entry name" value="C-1-TETRAHYDROFOLATE SYNTHASE, CYTOPLASMIC-RELATED"/>
    <property type="match status" value="1"/>
</dbReference>
<dbReference type="Pfam" id="PF00763">
    <property type="entry name" value="THF_DHG_CYH"/>
    <property type="match status" value="1"/>
</dbReference>
<dbReference type="Pfam" id="PF02882">
    <property type="entry name" value="THF_DHG_CYH_C"/>
    <property type="match status" value="1"/>
</dbReference>
<dbReference type="PRINTS" id="PR00085">
    <property type="entry name" value="THFDHDRGNASE"/>
</dbReference>
<dbReference type="SUPFAM" id="SSF53223">
    <property type="entry name" value="Aminoacid dehydrogenase-like, N-terminal domain"/>
    <property type="match status" value="1"/>
</dbReference>
<dbReference type="SUPFAM" id="SSF51735">
    <property type="entry name" value="NAD(P)-binding Rossmann-fold domains"/>
    <property type="match status" value="1"/>
</dbReference>
<dbReference type="PROSITE" id="PS00767">
    <property type="entry name" value="THF_DHG_CYH_2"/>
    <property type="match status" value="1"/>
</dbReference>
<comment type="function">
    <text evidence="1">Catalyzes the oxidation of 5,10-methylenetetrahydrofolate to 5,10-methenyltetrahydrofolate and then the hydrolysis of 5,10-methenyltetrahydrofolate to 10-formyltetrahydrofolate.</text>
</comment>
<comment type="catalytic activity">
    <reaction evidence="1">
        <text>(6R)-5,10-methylene-5,6,7,8-tetrahydrofolate + NADP(+) = (6R)-5,10-methenyltetrahydrofolate + NADPH</text>
        <dbReference type="Rhea" id="RHEA:22812"/>
        <dbReference type="ChEBI" id="CHEBI:15636"/>
        <dbReference type="ChEBI" id="CHEBI:57455"/>
        <dbReference type="ChEBI" id="CHEBI:57783"/>
        <dbReference type="ChEBI" id="CHEBI:58349"/>
        <dbReference type="EC" id="1.5.1.5"/>
    </reaction>
</comment>
<comment type="catalytic activity">
    <reaction evidence="1">
        <text>(6R)-5,10-methenyltetrahydrofolate + H2O = (6R)-10-formyltetrahydrofolate + H(+)</text>
        <dbReference type="Rhea" id="RHEA:23700"/>
        <dbReference type="ChEBI" id="CHEBI:15377"/>
        <dbReference type="ChEBI" id="CHEBI:15378"/>
        <dbReference type="ChEBI" id="CHEBI:57455"/>
        <dbReference type="ChEBI" id="CHEBI:195366"/>
        <dbReference type="EC" id="3.5.4.9"/>
    </reaction>
</comment>
<comment type="pathway">
    <text evidence="1">One-carbon metabolism; tetrahydrofolate interconversion.</text>
</comment>
<comment type="subunit">
    <text evidence="1">Homodimer.</text>
</comment>
<comment type="similarity">
    <text evidence="1">Belongs to the tetrahydrofolate dehydrogenase/cyclohydrolase family.</text>
</comment>
<reference key="1">
    <citation type="submission" date="2008-01" db="EMBL/GenBank/DDBJ databases">
        <title>Complete sequence of chromosome of Caulobacter sp. K31.</title>
        <authorList>
            <consortium name="US DOE Joint Genome Institute"/>
            <person name="Copeland A."/>
            <person name="Lucas S."/>
            <person name="Lapidus A."/>
            <person name="Barry K."/>
            <person name="Glavina del Rio T."/>
            <person name="Dalin E."/>
            <person name="Tice H."/>
            <person name="Pitluck S."/>
            <person name="Bruce D."/>
            <person name="Goodwin L."/>
            <person name="Thompson L.S."/>
            <person name="Brettin T."/>
            <person name="Detter J.C."/>
            <person name="Han C."/>
            <person name="Schmutz J."/>
            <person name="Larimer F."/>
            <person name="Land M."/>
            <person name="Hauser L."/>
            <person name="Kyrpides N."/>
            <person name="Kim E."/>
            <person name="Stephens C."/>
            <person name="Richardson P."/>
        </authorList>
    </citation>
    <scope>NUCLEOTIDE SEQUENCE [LARGE SCALE GENOMIC DNA]</scope>
    <source>
        <strain>K31</strain>
    </source>
</reference>
<keyword id="KW-0028">Amino-acid biosynthesis</keyword>
<keyword id="KW-0368">Histidine biosynthesis</keyword>
<keyword id="KW-0378">Hydrolase</keyword>
<keyword id="KW-0486">Methionine biosynthesis</keyword>
<keyword id="KW-0511">Multifunctional enzyme</keyword>
<keyword id="KW-0521">NADP</keyword>
<keyword id="KW-0554">One-carbon metabolism</keyword>
<keyword id="KW-0560">Oxidoreductase</keyword>
<keyword id="KW-0658">Purine biosynthesis</keyword>
<accession>B0T3F7</accession>